<name>RS8_CHLPM</name>
<reference key="1">
    <citation type="submission" date="2007-03" db="EMBL/GenBank/DDBJ databases">
        <title>Complete sequence of Prosthecochloris vibrioformis DSM 265.</title>
        <authorList>
            <consortium name="US DOE Joint Genome Institute"/>
            <person name="Copeland A."/>
            <person name="Lucas S."/>
            <person name="Lapidus A."/>
            <person name="Barry K."/>
            <person name="Detter J.C."/>
            <person name="Glavina del Rio T."/>
            <person name="Hammon N."/>
            <person name="Israni S."/>
            <person name="Pitluck S."/>
            <person name="Schmutz J."/>
            <person name="Larimer F."/>
            <person name="Land M."/>
            <person name="Hauser L."/>
            <person name="Mikhailova N."/>
            <person name="Li T."/>
            <person name="Overmann J."/>
            <person name="Schuster S.C."/>
            <person name="Bryant D.A."/>
            <person name="Richardson P."/>
        </authorList>
    </citation>
    <scope>NUCLEOTIDE SEQUENCE [LARGE SCALE GENOMIC DNA]</scope>
    <source>
        <strain>DSM 265 / 1930</strain>
    </source>
</reference>
<protein>
    <recommendedName>
        <fullName evidence="1">Small ribosomal subunit protein uS8</fullName>
    </recommendedName>
    <alternativeName>
        <fullName evidence="2">30S ribosomal protein S8</fullName>
    </alternativeName>
</protein>
<accession>A4SCS3</accession>
<evidence type="ECO:0000255" key="1">
    <source>
        <dbReference type="HAMAP-Rule" id="MF_01302"/>
    </source>
</evidence>
<evidence type="ECO:0000305" key="2"/>
<keyword id="KW-0687">Ribonucleoprotein</keyword>
<keyword id="KW-0689">Ribosomal protein</keyword>
<keyword id="KW-0694">RNA-binding</keyword>
<keyword id="KW-0699">rRNA-binding</keyword>
<dbReference type="EMBL" id="CP000607">
    <property type="protein sequence ID" value="ABP36282.1"/>
    <property type="molecule type" value="Genomic_DNA"/>
</dbReference>
<dbReference type="SMR" id="A4SCS3"/>
<dbReference type="STRING" id="290318.Cvib_0260"/>
<dbReference type="KEGG" id="pvi:Cvib_0260"/>
<dbReference type="eggNOG" id="COG0096">
    <property type="taxonomic scope" value="Bacteria"/>
</dbReference>
<dbReference type="HOGENOM" id="CLU_098428_0_2_10"/>
<dbReference type="OrthoDB" id="9802617at2"/>
<dbReference type="GO" id="GO:1990904">
    <property type="term" value="C:ribonucleoprotein complex"/>
    <property type="evidence" value="ECO:0007669"/>
    <property type="project" value="UniProtKB-KW"/>
</dbReference>
<dbReference type="GO" id="GO:0005840">
    <property type="term" value="C:ribosome"/>
    <property type="evidence" value="ECO:0007669"/>
    <property type="project" value="UniProtKB-KW"/>
</dbReference>
<dbReference type="GO" id="GO:0019843">
    <property type="term" value="F:rRNA binding"/>
    <property type="evidence" value="ECO:0007669"/>
    <property type="project" value="UniProtKB-UniRule"/>
</dbReference>
<dbReference type="GO" id="GO:0003735">
    <property type="term" value="F:structural constituent of ribosome"/>
    <property type="evidence" value="ECO:0007669"/>
    <property type="project" value="InterPro"/>
</dbReference>
<dbReference type="GO" id="GO:0006412">
    <property type="term" value="P:translation"/>
    <property type="evidence" value="ECO:0007669"/>
    <property type="project" value="UniProtKB-UniRule"/>
</dbReference>
<dbReference type="FunFam" id="3.30.1490.10:FF:000001">
    <property type="entry name" value="30S ribosomal protein S8"/>
    <property type="match status" value="1"/>
</dbReference>
<dbReference type="Gene3D" id="3.30.1370.30">
    <property type="match status" value="1"/>
</dbReference>
<dbReference type="Gene3D" id="3.30.1490.10">
    <property type="match status" value="1"/>
</dbReference>
<dbReference type="HAMAP" id="MF_01302_B">
    <property type="entry name" value="Ribosomal_uS8_B"/>
    <property type="match status" value="1"/>
</dbReference>
<dbReference type="InterPro" id="IPR000630">
    <property type="entry name" value="Ribosomal_uS8"/>
</dbReference>
<dbReference type="InterPro" id="IPR047863">
    <property type="entry name" value="Ribosomal_uS8_CS"/>
</dbReference>
<dbReference type="InterPro" id="IPR035987">
    <property type="entry name" value="Ribosomal_uS8_sf"/>
</dbReference>
<dbReference type="NCBIfam" id="NF001109">
    <property type="entry name" value="PRK00136.1"/>
    <property type="match status" value="1"/>
</dbReference>
<dbReference type="PANTHER" id="PTHR11758">
    <property type="entry name" value="40S RIBOSOMAL PROTEIN S15A"/>
    <property type="match status" value="1"/>
</dbReference>
<dbReference type="Pfam" id="PF00410">
    <property type="entry name" value="Ribosomal_S8"/>
    <property type="match status" value="1"/>
</dbReference>
<dbReference type="SUPFAM" id="SSF56047">
    <property type="entry name" value="Ribosomal protein S8"/>
    <property type="match status" value="1"/>
</dbReference>
<dbReference type="PROSITE" id="PS00053">
    <property type="entry name" value="RIBOSOMAL_S8"/>
    <property type="match status" value="1"/>
</dbReference>
<proteinExistence type="inferred from homology"/>
<sequence length="131" mass="14811">MPVTDSIADYITRLRNAGRAKNKTTDIPYSKLRENISQLLLEKGYIKGFTVITTEKFPFIRVEMKYTAAGVPSIKEITRVSRPGRRMYEGKDIKKYLGGLGLYIISTSKGVITDKEAREQGVGGEILFRIY</sequence>
<organism>
    <name type="scientific">Chlorobium phaeovibrioides (strain DSM 265 / 1930)</name>
    <name type="common">Prosthecochloris vibrioformis (strain DSM 265)</name>
    <dbReference type="NCBI Taxonomy" id="290318"/>
    <lineage>
        <taxon>Bacteria</taxon>
        <taxon>Pseudomonadati</taxon>
        <taxon>Chlorobiota</taxon>
        <taxon>Chlorobiia</taxon>
        <taxon>Chlorobiales</taxon>
        <taxon>Chlorobiaceae</taxon>
        <taxon>Chlorobium/Pelodictyon group</taxon>
        <taxon>Chlorobium</taxon>
    </lineage>
</organism>
<gene>
    <name evidence="1" type="primary">rpsH</name>
    <name type="ordered locus">Cvib_0260</name>
</gene>
<comment type="function">
    <text evidence="1">One of the primary rRNA binding proteins, it binds directly to 16S rRNA central domain where it helps coordinate assembly of the platform of the 30S subunit.</text>
</comment>
<comment type="subunit">
    <text evidence="1">Part of the 30S ribosomal subunit. Contacts proteins S5 and S12.</text>
</comment>
<comment type="similarity">
    <text evidence="1">Belongs to the universal ribosomal protein uS8 family.</text>
</comment>
<feature type="chain" id="PRO_1000085934" description="Small ribosomal subunit protein uS8">
    <location>
        <begin position="1"/>
        <end position="131"/>
    </location>
</feature>